<name>ALF1_STAAM</name>
<reference key="1">
    <citation type="journal article" date="2001" name="Lancet">
        <title>Whole genome sequencing of meticillin-resistant Staphylococcus aureus.</title>
        <authorList>
            <person name="Kuroda M."/>
            <person name="Ohta T."/>
            <person name="Uchiyama I."/>
            <person name="Baba T."/>
            <person name="Yuzawa H."/>
            <person name="Kobayashi I."/>
            <person name="Cui L."/>
            <person name="Oguchi A."/>
            <person name="Aoki K."/>
            <person name="Nagai Y."/>
            <person name="Lian J.-Q."/>
            <person name="Ito T."/>
            <person name="Kanamori M."/>
            <person name="Matsumaru H."/>
            <person name="Maruyama A."/>
            <person name="Murakami H."/>
            <person name="Hosoyama A."/>
            <person name="Mizutani-Ui Y."/>
            <person name="Takahashi N.K."/>
            <person name="Sawano T."/>
            <person name="Inoue R."/>
            <person name="Kaito C."/>
            <person name="Sekimizu K."/>
            <person name="Hirakawa H."/>
            <person name="Kuhara S."/>
            <person name="Goto S."/>
            <person name="Yabuzaki J."/>
            <person name="Kanehisa M."/>
            <person name="Yamashita A."/>
            <person name="Oshima K."/>
            <person name="Furuya K."/>
            <person name="Yoshino C."/>
            <person name="Shiba T."/>
            <person name="Hattori M."/>
            <person name="Ogasawara N."/>
            <person name="Hayashi H."/>
            <person name="Hiramatsu K."/>
        </authorList>
    </citation>
    <scope>NUCLEOTIDE SEQUENCE [LARGE SCALE GENOMIC DNA]</scope>
    <source>
        <strain>Mu50 / ATCC 700699</strain>
    </source>
</reference>
<evidence type="ECO:0000250" key="1"/>
<evidence type="ECO:0000305" key="2"/>
<protein>
    <recommendedName>
        <fullName>Fructose-bisphosphate aldolase class 1</fullName>
        <ecNumber>4.1.2.13</ecNumber>
    </recommendedName>
    <alternativeName>
        <fullName>Fructose-bisphosphate aldolase class I</fullName>
        <shortName>FBP aldolase</shortName>
    </alternativeName>
</protein>
<proteinExistence type="inferred from homology"/>
<comment type="catalytic activity">
    <reaction>
        <text>beta-D-fructose 1,6-bisphosphate = D-glyceraldehyde 3-phosphate + dihydroxyacetone phosphate</text>
        <dbReference type="Rhea" id="RHEA:14729"/>
        <dbReference type="ChEBI" id="CHEBI:32966"/>
        <dbReference type="ChEBI" id="CHEBI:57642"/>
        <dbReference type="ChEBI" id="CHEBI:59776"/>
        <dbReference type="EC" id="4.1.2.13"/>
    </reaction>
</comment>
<comment type="pathway">
    <text>Carbohydrate degradation; glycolysis; D-glyceraldehyde 3-phosphate and glycerone phosphate from D-glucose: step 4/4.</text>
</comment>
<comment type="similarity">
    <text evidence="2">Belongs to the class I fructose-bisphosphate aldolase family.</text>
</comment>
<organism>
    <name type="scientific">Staphylococcus aureus (strain Mu50 / ATCC 700699)</name>
    <dbReference type="NCBI Taxonomy" id="158878"/>
    <lineage>
        <taxon>Bacteria</taxon>
        <taxon>Bacillati</taxon>
        <taxon>Bacillota</taxon>
        <taxon>Bacilli</taxon>
        <taxon>Bacillales</taxon>
        <taxon>Staphylococcaceae</taxon>
        <taxon>Staphylococcus</taxon>
    </lineage>
</organism>
<dbReference type="EC" id="4.1.2.13"/>
<dbReference type="EMBL" id="BA000017">
    <property type="protein sequence ID" value="BAB58768.1"/>
    <property type="molecule type" value="Genomic_DNA"/>
</dbReference>
<dbReference type="RefSeq" id="WP_001031409.1">
    <property type="nucleotide sequence ID" value="NC_002758.2"/>
</dbReference>
<dbReference type="SMR" id="P67472"/>
<dbReference type="KEGG" id="sav:SAV2606"/>
<dbReference type="HOGENOM" id="CLU_081560_0_0_9"/>
<dbReference type="PhylomeDB" id="P67472"/>
<dbReference type="UniPathway" id="UPA00109">
    <property type="reaction ID" value="UER00183"/>
</dbReference>
<dbReference type="Proteomes" id="UP000002481">
    <property type="component" value="Chromosome"/>
</dbReference>
<dbReference type="GO" id="GO:0004332">
    <property type="term" value="F:fructose-bisphosphate aldolase activity"/>
    <property type="evidence" value="ECO:0007669"/>
    <property type="project" value="UniProtKB-UniRule"/>
</dbReference>
<dbReference type="GO" id="GO:0006096">
    <property type="term" value="P:glycolytic process"/>
    <property type="evidence" value="ECO:0007669"/>
    <property type="project" value="UniProtKB-UniRule"/>
</dbReference>
<dbReference type="Gene3D" id="3.20.20.70">
    <property type="entry name" value="Aldolase class I"/>
    <property type="match status" value="1"/>
</dbReference>
<dbReference type="HAMAP" id="MF_00729">
    <property type="entry name" value="FBP_aldolase_1"/>
    <property type="match status" value="1"/>
</dbReference>
<dbReference type="InterPro" id="IPR013785">
    <property type="entry name" value="Aldolase_TIM"/>
</dbReference>
<dbReference type="InterPro" id="IPR000741">
    <property type="entry name" value="FBA_I"/>
</dbReference>
<dbReference type="InterPro" id="IPR023014">
    <property type="entry name" value="FBA_I_Gram+-type"/>
</dbReference>
<dbReference type="NCBIfam" id="NF003784">
    <property type="entry name" value="PRK05377.1"/>
    <property type="match status" value="1"/>
</dbReference>
<dbReference type="PANTHER" id="PTHR11627">
    <property type="entry name" value="FRUCTOSE-BISPHOSPHATE ALDOLASE"/>
    <property type="match status" value="1"/>
</dbReference>
<dbReference type="Pfam" id="PF00274">
    <property type="entry name" value="Glycolytic"/>
    <property type="match status" value="1"/>
</dbReference>
<dbReference type="SUPFAM" id="SSF51569">
    <property type="entry name" value="Aldolase"/>
    <property type="match status" value="1"/>
</dbReference>
<accession>P67472</accession>
<accession>Q99R31</accession>
<sequence length="296" mass="33042">MNKEQLEKMKNGKGFIAALDQSGGSTPKALKEYGVNEDQYSNEDEMFQLVHDMRTRVVTSPSFSPDKILGAILFEQTMDREVEGKYTADYLADKGVVPFLKVDKGLAEEQNGVQLMKPIDNLDSLLDRANERHIFGTKMRSNILELNEQGIKDVVEQQFEVAKQIIAKGLVPIIEPEVNINAKDKAEIEKVLKAELKKGLDSLNADQLVMLKLTIPTEPNLYKELAEHPNVVRVVVLSGGYSREKANELLKDNDELIASFSRALASDLRADQSKEEFDKALGDAVESIYDASVNKN</sequence>
<gene>
    <name type="primary">fda</name>
    <name type="ordered locus">SAV2606</name>
</gene>
<keyword id="KW-0324">Glycolysis</keyword>
<keyword id="KW-0456">Lyase</keyword>
<keyword id="KW-0704">Schiff base</keyword>
<feature type="initiator methionine" description="Removed" evidence="1">
    <location>
        <position position="1"/>
    </location>
</feature>
<feature type="chain" id="PRO_0000216904" description="Fructose-bisphosphate aldolase class 1">
    <location>
        <begin position="2"/>
        <end position="296"/>
    </location>
</feature>
<feature type="active site" description="Proton acceptor" evidence="1">
    <location>
        <position position="175"/>
    </location>
</feature>
<feature type="active site" description="Schiff-base intermediate with dihydroxyacetone-P" evidence="1">
    <location>
        <position position="212"/>
    </location>
</feature>